<dbReference type="EMBL" id="AL766843">
    <property type="protein sequence ID" value="CAD45708.1"/>
    <property type="molecule type" value="Genomic_DNA"/>
</dbReference>
<dbReference type="RefSeq" id="WP_000818141.1">
    <property type="nucleotide sequence ID" value="NC_004368.1"/>
</dbReference>
<dbReference type="SMR" id="Q8E7T4"/>
<dbReference type="GeneID" id="66885023"/>
<dbReference type="KEGG" id="san:rplV"/>
<dbReference type="eggNOG" id="COG0091">
    <property type="taxonomic scope" value="Bacteria"/>
</dbReference>
<dbReference type="HOGENOM" id="CLU_083987_3_3_9"/>
<dbReference type="Proteomes" id="UP000000823">
    <property type="component" value="Chromosome"/>
</dbReference>
<dbReference type="GO" id="GO:0022625">
    <property type="term" value="C:cytosolic large ribosomal subunit"/>
    <property type="evidence" value="ECO:0007669"/>
    <property type="project" value="TreeGrafter"/>
</dbReference>
<dbReference type="GO" id="GO:0019843">
    <property type="term" value="F:rRNA binding"/>
    <property type="evidence" value="ECO:0007669"/>
    <property type="project" value="UniProtKB-UniRule"/>
</dbReference>
<dbReference type="GO" id="GO:0003735">
    <property type="term" value="F:structural constituent of ribosome"/>
    <property type="evidence" value="ECO:0007669"/>
    <property type="project" value="InterPro"/>
</dbReference>
<dbReference type="GO" id="GO:0006412">
    <property type="term" value="P:translation"/>
    <property type="evidence" value="ECO:0007669"/>
    <property type="project" value="UniProtKB-UniRule"/>
</dbReference>
<dbReference type="CDD" id="cd00336">
    <property type="entry name" value="Ribosomal_L22"/>
    <property type="match status" value="1"/>
</dbReference>
<dbReference type="FunFam" id="3.90.470.10:FF:000001">
    <property type="entry name" value="50S ribosomal protein L22"/>
    <property type="match status" value="1"/>
</dbReference>
<dbReference type="Gene3D" id="3.90.470.10">
    <property type="entry name" value="Ribosomal protein L22/L17"/>
    <property type="match status" value="1"/>
</dbReference>
<dbReference type="HAMAP" id="MF_01331_B">
    <property type="entry name" value="Ribosomal_uL22_B"/>
    <property type="match status" value="1"/>
</dbReference>
<dbReference type="InterPro" id="IPR001063">
    <property type="entry name" value="Ribosomal_uL22"/>
</dbReference>
<dbReference type="InterPro" id="IPR005727">
    <property type="entry name" value="Ribosomal_uL22_bac/chlpt-type"/>
</dbReference>
<dbReference type="InterPro" id="IPR047867">
    <property type="entry name" value="Ribosomal_uL22_bac/org-type"/>
</dbReference>
<dbReference type="InterPro" id="IPR018260">
    <property type="entry name" value="Ribosomal_uL22_CS"/>
</dbReference>
<dbReference type="InterPro" id="IPR036394">
    <property type="entry name" value="Ribosomal_uL22_sf"/>
</dbReference>
<dbReference type="NCBIfam" id="TIGR01044">
    <property type="entry name" value="rplV_bact"/>
    <property type="match status" value="1"/>
</dbReference>
<dbReference type="PANTHER" id="PTHR13501">
    <property type="entry name" value="CHLOROPLAST 50S RIBOSOMAL PROTEIN L22-RELATED"/>
    <property type="match status" value="1"/>
</dbReference>
<dbReference type="PANTHER" id="PTHR13501:SF8">
    <property type="entry name" value="LARGE RIBOSOMAL SUBUNIT PROTEIN UL22M"/>
    <property type="match status" value="1"/>
</dbReference>
<dbReference type="Pfam" id="PF00237">
    <property type="entry name" value="Ribosomal_L22"/>
    <property type="match status" value="1"/>
</dbReference>
<dbReference type="SUPFAM" id="SSF54843">
    <property type="entry name" value="Ribosomal protein L22"/>
    <property type="match status" value="1"/>
</dbReference>
<dbReference type="PROSITE" id="PS00464">
    <property type="entry name" value="RIBOSOMAL_L22"/>
    <property type="match status" value="1"/>
</dbReference>
<protein>
    <recommendedName>
        <fullName evidence="1">Large ribosomal subunit protein uL22</fullName>
    </recommendedName>
    <alternativeName>
        <fullName evidence="2">50S ribosomal protein L22</fullName>
    </alternativeName>
</protein>
<proteinExistence type="inferred from homology"/>
<comment type="function">
    <text evidence="1">This protein binds specifically to 23S rRNA; its binding is stimulated by other ribosomal proteins, e.g. L4, L17, and L20. It is important during the early stages of 50S assembly. It makes multiple contacts with different domains of the 23S rRNA in the assembled 50S subunit and ribosome (By similarity).</text>
</comment>
<comment type="function">
    <text evidence="1">The globular domain of the protein is located near the polypeptide exit tunnel on the outside of the subunit, while an extended beta-hairpin is found that lines the wall of the exit tunnel in the center of the 70S ribosome.</text>
</comment>
<comment type="subunit">
    <text evidence="1">Part of the 50S ribosomal subunit.</text>
</comment>
<comment type="similarity">
    <text evidence="1">Belongs to the universal ribosomal protein uL22 family.</text>
</comment>
<reference key="1">
    <citation type="journal article" date="2002" name="Mol. Microbiol.">
        <title>Genome sequence of Streptococcus agalactiae, a pathogen causing invasive neonatal disease.</title>
        <authorList>
            <person name="Glaser P."/>
            <person name="Rusniok C."/>
            <person name="Buchrieser C."/>
            <person name="Chevalier F."/>
            <person name="Frangeul L."/>
            <person name="Msadek T."/>
            <person name="Zouine M."/>
            <person name="Couve E."/>
            <person name="Lalioui L."/>
            <person name="Poyart C."/>
            <person name="Trieu-Cuot P."/>
            <person name="Kunst F."/>
        </authorList>
    </citation>
    <scope>NUCLEOTIDE SEQUENCE [LARGE SCALE GENOMIC DNA]</scope>
    <source>
        <strain>NEM316</strain>
    </source>
</reference>
<keyword id="KW-0687">Ribonucleoprotein</keyword>
<keyword id="KW-0689">Ribosomal protein</keyword>
<keyword id="KW-0694">RNA-binding</keyword>
<keyword id="KW-0699">rRNA-binding</keyword>
<feature type="chain" id="PRO_0000125231" description="Large ribosomal subunit protein uL22">
    <location>
        <begin position="1"/>
        <end position="114"/>
    </location>
</feature>
<gene>
    <name evidence="1" type="primary">rplV</name>
    <name type="ordered locus">gbs0063</name>
</gene>
<name>RL22_STRA3</name>
<accession>Q8E7T4</accession>
<sequence length="114" mass="12416">MAEITSAKAMARTVRVSPRKTRLVLDLIRGKNVADAIAILKFTPNKAARVIEKTLNSAIANAENNFGLEKANLVVSETFANEGPTMKRFRPRAKGSASPINKRTTHVTVVVSEK</sequence>
<evidence type="ECO:0000255" key="1">
    <source>
        <dbReference type="HAMAP-Rule" id="MF_01331"/>
    </source>
</evidence>
<evidence type="ECO:0000305" key="2"/>
<organism>
    <name type="scientific">Streptococcus agalactiae serotype III (strain NEM316)</name>
    <dbReference type="NCBI Taxonomy" id="211110"/>
    <lineage>
        <taxon>Bacteria</taxon>
        <taxon>Bacillati</taxon>
        <taxon>Bacillota</taxon>
        <taxon>Bacilli</taxon>
        <taxon>Lactobacillales</taxon>
        <taxon>Streptococcaceae</taxon>
        <taxon>Streptococcus</taxon>
    </lineage>
</organism>